<protein>
    <recommendedName>
        <fullName evidence="3">Conotoxin tx5c</fullName>
    </recommendedName>
    <alternativeName>
        <fullName evidence="3">Conotoxin 2</fullName>
    </alternativeName>
    <component>
        <recommendedName>
            <fullName evidence="3">Conotoxin tx5c-b</fullName>
        </recommendedName>
    </component>
    <component>
        <recommendedName>
            <fullName evidence="3">Conotoxin tx5c-c</fullName>
        </recommendedName>
    </component>
</protein>
<proteinExistence type="evidence at protein level"/>
<comment type="subcellular location">
    <subcellularLocation>
        <location evidence="1">Secreted</location>
    </subcellularLocation>
</comment>
<comment type="tissue specificity">
    <text evidence="4">Expressed by the venom duct.</text>
</comment>
<comment type="domain">
    <text evidence="3">The cysteine framework is V (CC-CC).</text>
</comment>
<comment type="PTM">
    <text evidence="3">Contains 2 disulfide bonds that can be either 'C1-C3, C2-C4' or 'C1-C4, C2-C3', since these disulfide connectivities have been observed for conotoxins with cysteine framework V (for examples, see AC P0DQQ7 and AC P81755).</text>
</comment>
<comment type="PTM">
    <text evidence="1">Contains 2 disulfide bonds.</text>
</comment>
<comment type="PTM">
    <text evidence="2">Tx5c is found with and without amidated Ile, tx5c-b is only found with amidated Ile and tx5c-c is only found without amidated Ile.</text>
</comment>
<comment type="mass spectrometry">
    <molecule>Conotoxin tx5c</molecule>
    <text>With amidation at Ile-14.</text>
</comment>
<comment type="mass spectrometry">
    <molecule>Conotoxin tx5c</molecule>
    <text>Without amidation at Ile-14.</text>
</comment>
<comment type="similarity">
    <text evidence="3">Belongs to the conotoxin T superfamily.</text>
</comment>
<sequence>KPCCSIHDNSCCGI</sequence>
<organism>
    <name type="scientific">Conus textile</name>
    <name type="common">Cloth-of-gold cone</name>
    <dbReference type="NCBI Taxonomy" id="6494"/>
    <lineage>
        <taxon>Eukaryota</taxon>
        <taxon>Metazoa</taxon>
        <taxon>Spiralia</taxon>
        <taxon>Lophotrochozoa</taxon>
        <taxon>Mollusca</taxon>
        <taxon>Gastropoda</taxon>
        <taxon>Caenogastropoda</taxon>
        <taxon>Neogastropoda</taxon>
        <taxon>Conoidea</taxon>
        <taxon>Conidae</taxon>
        <taxon>Conus</taxon>
        <taxon>Cylinder</taxon>
    </lineage>
</organism>
<name>CT5C_CONTE</name>
<reference key="1">
    <citation type="journal article" date="2009" name="Proc. Natl. Acad. Sci. U.S.A.">
        <title>Rapid sensitive analysis of cysteine rich peptide venom components.</title>
        <authorList>
            <person name="Ueberheide B.M."/>
            <person name="Fenyo D."/>
            <person name="Alewood P.F."/>
            <person name="Chait B.T."/>
        </authorList>
    </citation>
    <scope>PROTEIN SEQUENCE</scope>
    <scope>SUBCELLULAR LOCATION</scope>
    <scope>MASS SPECTROMETRY</scope>
    <scope>AMIDATION AT ILE-14</scope>
    <source>
        <tissue>Venom</tissue>
    </source>
</reference>
<reference key="2">
    <citation type="journal article" date="2012" name="J. Proteome Res.">
        <title>Constrained de novo sequencing of conotoxins.</title>
        <authorList>
            <person name="Bhatia S."/>
            <person name="Kil Y.J."/>
            <person name="Ueberheide B."/>
            <person name="Chait B.T."/>
            <person name="Tayo L."/>
            <person name="Cruz L."/>
            <person name="Lu B."/>
            <person name="Yates J.R. III"/>
            <person name="Bern M."/>
        </authorList>
    </citation>
    <scope>IDENTIFICATION BY MASS SPECTROMETRY</scope>
    <scope>SUBCELLULAR LOCATION</scope>
    <scope>AMIDATION AT ILE-14</scope>
    <source>
        <tissue>Venom</tissue>
    </source>
</reference>
<feature type="peptide" id="PRO_0000371268" description="Conotoxin tx5c" evidence="1">
    <location>
        <begin position="1"/>
        <end position="14"/>
    </location>
</feature>
<feature type="peptide" id="PRO_0000445115" description="Conotoxin tx5c-b" evidence="2">
    <location>
        <begin position="2"/>
        <end position="14"/>
    </location>
</feature>
<feature type="peptide" id="PRO_0000445116" description="Conotoxin tx5c-c" evidence="2">
    <location>
        <begin position="3"/>
        <end position="14"/>
    </location>
</feature>
<feature type="modified residue" description="Isoleucine amide; partial" evidence="1 2">
    <location>
        <position position="14"/>
    </location>
</feature>
<feature type="unsure residue" description="I or L" evidence="4">
    <location>
        <position position="6"/>
    </location>
</feature>
<feature type="unsure residue" description="I or L" evidence="4">
    <location>
        <position position="14"/>
    </location>
</feature>
<evidence type="ECO:0000269" key="1">
    <source>
    </source>
</evidence>
<evidence type="ECO:0000269" key="2">
    <source>
    </source>
</evidence>
<evidence type="ECO:0000305" key="3"/>
<evidence type="ECO:0000305" key="4">
    <source>
    </source>
</evidence>
<accession>P86259</accession>
<keyword id="KW-0027">Amidation</keyword>
<keyword id="KW-0903">Direct protein sequencing</keyword>
<keyword id="KW-1015">Disulfide bond</keyword>
<keyword id="KW-0964">Secreted</keyword>
<keyword id="KW-0800">Toxin</keyword>
<dbReference type="ConoServer" id="3756">
    <property type="toxin name" value="Tx5c"/>
</dbReference>
<dbReference type="GO" id="GO:0005576">
    <property type="term" value="C:extracellular region"/>
    <property type="evidence" value="ECO:0007669"/>
    <property type="project" value="UniProtKB-SubCell"/>
</dbReference>
<dbReference type="GO" id="GO:0090729">
    <property type="term" value="F:toxin activity"/>
    <property type="evidence" value="ECO:0007669"/>
    <property type="project" value="UniProtKB-KW"/>
</dbReference>